<sequence>MEFKHIPVLLKETIDSLNIKQDGVYVDCTLGGGGHSLEILKRLSDKGKLIAIDQDISAINWSEERLKNFKNIIYVHDNFYNIQQILKELKIDKVDGIIMDLGVSSYQLDEGKRGFSYMKDAPLDMRMNRDSSLSAYEIVNQYNEEELCRIIRDYGEENFSRRISKFIVKAREESPISTTLQLVGIIKKAIPLKFQKEGHPAKRTFQAIRIEVNEELKILDKAVEDGVANLNTGGRIAIITFHSLEDRIIKSKFKMLENPCTCPADFPICICGKKPIVKIVNKKPIVPTEEEKSINPRSKSSKLRIAERI</sequence>
<organism>
    <name type="scientific">Clostridium kluyveri (strain NBRC 12016)</name>
    <dbReference type="NCBI Taxonomy" id="583346"/>
    <lineage>
        <taxon>Bacteria</taxon>
        <taxon>Bacillati</taxon>
        <taxon>Bacillota</taxon>
        <taxon>Clostridia</taxon>
        <taxon>Eubacteriales</taxon>
        <taxon>Clostridiaceae</taxon>
        <taxon>Clostridium</taxon>
    </lineage>
</organism>
<reference key="1">
    <citation type="submission" date="2005-09" db="EMBL/GenBank/DDBJ databases">
        <title>Complete genome sequence of Clostridium kluyveri and comparative genomics of Clostridia species.</title>
        <authorList>
            <person name="Inui M."/>
            <person name="Nonaka H."/>
            <person name="Shinoda Y."/>
            <person name="Ikenaga Y."/>
            <person name="Abe M."/>
            <person name="Naito K."/>
            <person name="Vertes A.A."/>
            <person name="Yukawa H."/>
        </authorList>
    </citation>
    <scope>NUCLEOTIDE SEQUENCE [LARGE SCALE GENOMIC DNA]</scope>
    <source>
        <strain>NBRC 12016</strain>
    </source>
</reference>
<name>RSMH_CLOK1</name>
<evidence type="ECO:0000255" key="1">
    <source>
        <dbReference type="HAMAP-Rule" id="MF_01007"/>
    </source>
</evidence>
<feature type="chain" id="PRO_0000386821" description="Ribosomal RNA small subunit methyltransferase H">
    <location>
        <begin position="1"/>
        <end position="309"/>
    </location>
</feature>
<feature type="binding site" evidence="1">
    <location>
        <begin position="33"/>
        <end position="35"/>
    </location>
    <ligand>
        <name>S-adenosyl-L-methionine</name>
        <dbReference type="ChEBI" id="CHEBI:59789"/>
    </ligand>
</feature>
<feature type="binding site" evidence="1">
    <location>
        <position position="53"/>
    </location>
    <ligand>
        <name>S-adenosyl-L-methionine</name>
        <dbReference type="ChEBI" id="CHEBI:59789"/>
    </ligand>
</feature>
<feature type="binding site" evidence="1">
    <location>
        <position position="79"/>
    </location>
    <ligand>
        <name>S-adenosyl-L-methionine</name>
        <dbReference type="ChEBI" id="CHEBI:59789"/>
    </ligand>
</feature>
<feature type="binding site" evidence="1">
    <location>
        <position position="100"/>
    </location>
    <ligand>
        <name>S-adenosyl-L-methionine</name>
        <dbReference type="ChEBI" id="CHEBI:59789"/>
    </ligand>
</feature>
<feature type="binding site" evidence="1">
    <location>
        <position position="107"/>
    </location>
    <ligand>
        <name>S-adenosyl-L-methionine</name>
        <dbReference type="ChEBI" id="CHEBI:59789"/>
    </ligand>
</feature>
<gene>
    <name evidence="1" type="primary">rsmH</name>
    <name type="synonym">mraW</name>
    <name type="ordered locus">CKR_1079</name>
</gene>
<protein>
    <recommendedName>
        <fullName evidence="1">Ribosomal RNA small subunit methyltransferase H</fullName>
        <ecNumber evidence="1">2.1.1.199</ecNumber>
    </recommendedName>
    <alternativeName>
        <fullName evidence="1">16S rRNA m(4)C1402 methyltransferase</fullName>
    </alternativeName>
    <alternativeName>
        <fullName evidence="1">rRNA (cytosine-N(4)-)-methyltransferase RsmH</fullName>
    </alternativeName>
</protein>
<proteinExistence type="inferred from homology"/>
<dbReference type="EC" id="2.1.1.199" evidence="1"/>
<dbReference type="EMBL" id="AP009049">
    <property type="protein sequence ID" value="BAH06130.1"/>
    <property type="molecule type" value="Genomic_DNA"/>
</dbReference>
<dbReference type="RefSeq" id="WP_012101562.1">
    <property type="nucleotide sequence ID" value="NC_011837.1"/>
</dbReference>
<dbReference type="SMR" id="B9E0V5"/>
<dbReference type="KEGG" id="ckr:CKR_1079"/>
<dbReference type="HOGENOM" id="CLU_038422_2_0_9"/>
<dbReference type="Proteomes" id="UP000007969">
    <property type="component" value="Chromosome"/>
</dbReference>
<dbReference type="GO" id="GO:0005737">
    <property type="term" value="C:cytoplasm"/>
    <property type="evidence" value="ECO:0007669"/>
    <property type="project" value="UniProtKB-SubCell"/>
</dbReference>
<dbReference type="GO" id="GO:0071424">
    <property type="term" value="F:rRNA (cytosine-N4-)-methyltransferase activity"/>
    <property type="evidence" value="ECO:0007669"/>
    <property type="project" value="UniProtKB-UniRule"/>
</dbReference>
<dbReference type="GO" id="GO:0070475">
    <property type="term" value="P:rRNA base methylation"/>
    <property type="evidence" value="ECO:0007669"/>
    <property type="project" value="UniProtKB-UniRule"/>
</dbReference>
<dbReference type="FunFam" id="1.10.150.170:FF:000001">
    <property type="entry name" value="Ribosomal RNA small subunit methyltransferase H"/>
    <property type="match status" value="1"/>
</dbReference>
<dbReference type="Gene3D" id="1.10.150.170">
    <property type="entry name" value="Putative methyltransferase TM0872, insert domain"/>
    <property type="match status" value="1"/>
</dbReference>
<dbReference type="Gene3D" id="3.40.50.150">
    <property type="entry name" value="Vaccinia Virus protein VP39"/>
    <property type="match status" value="1"/>
</dbReference>
<dbReference type="HAMAP" id="MF_01007">
    <property type="entry name" value="16SrRNA_methyltr_H"/>
    <property type="match status" value="1"/>
</dbReference>
<dbReference type="InterPro" id="IPR002903">
    <property type="entry name" value="RsmH"/>
</dbReference>
<dbReference type="InterPro" id="IPR023397">
    <property type="entry name" value="SAM-dep_MeTrfase_MraW_recog"/>
</dbReference>
<dbReference type="InterPro" id="IPR029063">
    <property type="entry name" value="SAM-dependent_MTases_sf"/>
</dbReference>
<dbReference type="NCBIfam" id="TIGR00006">
    <property type="entry name" value="16S rRNA (cytosine(1402)-N(4))-methyltransferase RsmH"/>
    <property type="match status" value="1"/>
</dbReference>
<dbReference type="PANTHER" id="PTHR11265:SF0">
    <property type="entry name" value="12S RRNA N4-METHYLCYTIDINE METHYLTRANSFERASE"/>
    <property type="match status" value="1"/>
</dbReference>
<dbReference type="PANTHER" id="PTHR11265">
    <property type="entry name" value="S-ADENOSYL-METHYLTRANSFERASE MRAW"/>
    <property type="match status" value="1"/>
</dbReference>
<dbReference type="Pfam" id="PF01795">
    <property type="entry name" value="Methyltransf_5"/>
    <property type="match status" value="1"/>
</dbReference>
<dbReference type="PIRSF" id="PIRSF004486">
    <property type="entry name" value="MraW"/>
    <property type="match status" value="1"/>
</dbReference>
<dbReference type="SUPFAM" id="SSF81799">
    <property type="entry name" value="Putative methyltransferase TM0872, insert domain"/>
    <property type="match status" value="1"/>
</dbReference>
<dbReference type="SUPFAM" id="SSF53335">
    <property type="entry name" value="S-adenosyl-L-methionine-dependent methyltransferases"/>
    <property type="match status" value="1"/>
</dbReference>
<comment type="function">
    <text evidence="1">Specifically methylates the N4 position of cytidine in position 1402 (C1402) of 16S rRNA.</text>
</comment>
<comment type="catalytic activity">
    <reaction evidence="1">
        <text>cytidine(1402) in 16S rRNA + S-adenosyl-L-methionine = N(4)-methylcytidine(1402) in 16S rRNA + S-adenosyl-L-homocysteine + H(+)</text>
        <dbReference type="Rhea" id="RHEA:42928"/>
        <dbReference type="Rhea" id="RHEA-COMP:10286"/>
        <dbReference type="Rhea" id="RHEA-COMP:10287"/>
        <dbReference type="ChEBI" id="CHEBI:15378"/>
        <dbReference type="ChEBI" id="CHEBI:57856"/>
        <dbReference type="ChEBI" id="CHEBI:59789"/>
        <dbReference type="ChEBI" id="CHEBI:74506"/>
        <dbReference type="ChEBI" id="CHEBI:82748"/>
        <dbReference type="EC" id="2.1.1.199"/>
    </reaction>
</comment>
<comment type="subcellular location">
    <subcellularLocation>
        <location evidence="1">Cytoplasm</location>
    </subcellularLocation>
</comment>
<comment type="similarity">
    <text evidence="1">Belongs to the methyltransferase superfamily. RsmH family.</text>
</comment>
<accession>B9E0V5</accession>
<keyword id="KW-0963">Cytoplasm</keyword>
<keyword id="KW-0489">Methyltransferase</keyword>
<keyword id="KW-0698">rRNA processing</keyword>
<keyword id="KW-0949">S-adenosyl-L-methionine</keyword>
<keyword id="KW-0808">Transferase</keyword>